<feature type="chain" id="PRO_0000141407" description="4-hydroxy-tetrahydrodipicolinate reductase">
    <location>
        <begin position="1"/>
        <end position="265"/>
    </location>
</feature>
<feature type="active site" description="Proton donor/acceptor" evidence="1">
    <location>
        <position position="158"/>
    </location>
</feature>
<feature type="active site" description="Proton donor" evidence="1">
    <location>
        <position position="162"/>
    </location>
</feature>
<feature type="binding site" evidence="1">
    <location>
        <begin position="9"/>
        <end position="14"/>
    </location>
    <ligand>
        <name>NAD(+)</name>
        <dbReference type="ChEBI" id="CHEBI:57540"/>
    </ligand>
</feature>
<feature type="binding site" evidence="1">
    <location>
        <begin position="100"/>
        <end position="102"/>
    </location>
    <ligand>
        <name>NAD(+)</name>
        <dbReference type="ChEBI" id="CHEBI:57540"/>
    </ligand>
</feature>
<feature type="binding site" evidence="1">
    <location>
        <begin position="124"/>
        <end position="127"/>
    </location>
    <ligand>
        <name>NAD(+)</name>
        <dbReference type="ChEBI" id="CHEBI:57540"/>
    </ligand>
</feature>
<feature type="binding site" evidence="1">
    <location>
        <position position="159"/>
    </location>
    <ligand>
        <name>(S)-2,3,4,5-tetrahydrodipicolinate</name>
        <dbReference type="ChEBI" id="CHEBI:16845"/>
    </ligand>
</feature>
<feature type="binding site" evidence="1">
    <location>
        <begin position="168"/>
        <end position="169"/>
    </location>
    <ligand>
        <name>(S)-2,3,4,5-tetrahydrodipicolinate</name>
        <dbReference type="ChEBI" id="CHEBI:16845"/>
    </ligand>
</feature>
<accession>O67061</accession>
<name>DAPB_AQUAE</name>
<sequence>MSVRVVVCGALGRMGRRIIELALQDKDVEVVGGVEHPDCVPSIDLGEALGKEELKGKPLTSRLEELLPYTDVVIEFSGNPTAAVGHAELTTLEKKAIVIGTTGFTKQEIEQIKEFSKNAPVLLSPNMSLGVNLLFKLAEIAAKVLKDKNFDAEIMEIHHRFKKDAPSGTAMKLAEILSETLEKKNLVFGRKGEAPRKEDEIGVMALRGGDVVGDHTVYFLGFGERIELTHRATSRDTFAKGAVEAAKWIKGKEPGFYTMFDVLGL</sequence>
<dbReference type="EC" id="1.17.1.8" evidence="1"/>
<dbReference type="EMBL" id="AE000657">
    <property type="protein sequence ID" value="AAC07008.1"/>
    <property type="molecule type" value="Genomic_DNA"/>
</dbReference>
<dbReference type="PIR" id="B70379">
    <property type="entry name" value="B70379"/>
</dbReference>
<dbReference type="RefSeq" id="NP_213623.1">
    <property type="nucleotide sequence ID" value="NC_000918.1"/>
</dbReference>
<dbReference type="RefSeq" id="WP_010880561.1">
    <property type="nucleotide sequence ID" value="NC_000918.1"/>
</dbReference>
<dbReference type="SMR" id="O67061"/>
<dbReference type="FunCoup" id="O67061">
    <property type="interactions" value="436"/>
</dbReference>
<dbReference type="STRING" id="224324.aq_916"/>
<dbReference type="EnsemblBacteria" id="AAC07008">
    <property type="protein sequence ID" value="AAC07008"/>
    <property type="gene ID" value="aq_916"/>
</dbReference>
<dbReference type="KEGG" id="aae:aq_916"/>
<dbReference type="PATRIC" id="fig|224324.8.peg.716"/>
<dbReference type="eggNOG" id="COG0289">
    <property type="taxonomic scope" value="Bacteria"/>
</dbReference>
<dbReference type="HOGENOM" id="CLU_047479_2_1_0"/>
<dbReference type="InParanoid" id="O67061"/>
<dbReference type="OrthoDB" id="9790352at2"/>
<dbReference type="UniPathway" id="UPA00034">
    <property type="reaction ID" value="UER00018"/>
</dbReference>
<dbReference type="Proteomes" id="UP000000798">
    <property type="component" value="Chromosome"/>
</dbReference>
<dbReference type="GO" id="GO:0005829">
    <property type="term" value="C:cytosol"/>
    <property type="evidence" value="ECO:0000318"/>
    <property type="project" value="GO_Central"/>
</dbReference>
<dbReference type="GO" id="GO:0008839">
    <property type="term" value="F:4-hydroxy-tetrahydrodipicolinate reductase"/>
    <property type="evidence" value="ECO:0000318"/>
    <property type="project" value="GO_Central"/>
</dbReference>
<dbReference type="GO" id="GO:0051287">
    <property type="term" value="F:NAD binding"/>
    <property type="evidence" value="ECO:0007669"/>
    <property type="project" value="UniProtKB-UniRule"/>
</dbReference>
<dbReference type="GO" id="GO:0050661">
    <property type="term" value="F:NADP binding"/>
    <property type="evidence" value="ECO:0007669"/>
    <property type="project" value="UniProtKB-UniRule"/>
</dbReference>
<dbReference type="GO" id="GO:0016726">
    <property type="term" value="F:oxidoreductase activity, acting on CH or CH2 groups, NAD or NADP as acceptor"/>
    <property type="evidence" value="ECO:0007669"/>
    <property type="project" value="UniProtKB-UniRule"/>
</dbReference>
<dbReference type="GO" id="GO:0019877">
    <property type="term" value="P:diaminopimelate biosynthetic process"/>
    <property type="evidence" value="ECO:0000318"/>
    <property type="project" value="GO_Central"/>
</dbReference>
<dbReference type="GO" id="GO:0009089">
    <property type="term" value="P:lysine biosynthetic process via diaminopimelate"/>
    <property type="evidence" value="ECO:0007669"/>
    <property type="project" value="UniProtKB-UniRule"/>
</dbReference>
<dbReference type="CDD" id="cd02274">
    <property type="entry name" value="DHDPR_N"/>
    <property type="match status" value="1"/>
</dbReference>
<dbReference type="FunFam" id="3.30.360.10:FF:000004">
    <property type="entry name" value="4-hydroxy-tetrahydrodipicolinate reductase"/>
    <property type="match status" value="1"/>
</dbReference>
<dbReference type="Gene3D" id="3.30.360.10">
    <property type="entry name" value="Dihydrodipicolinate Reductase, domain 2"/>
    <property type="match status" value="1"/>
</dbReference>
<dbReference type="Gene3D" id="3.40.50.720">
    <property type="entry name" value="NAD(P)-binding Rossmann-like Domain"/>
    <property type="match status" value="1"/>
</dbReference>
<dbReference type="HAMAP" id="MF_00102">
    <property type="entry name" value="DapB"/>
    <property type="match status" value="1"/>
</dbReference>
<dbReference type="InterPro" id="IPR022663">
    <property type="entry name" value="DapB_C"/>
</dbReference>
<dbReference type="InterPro" id="IPR000846">
    <property type="entry name" value="DapB_N"/>
</dbReference>
<dbReference type="InterPro" id="IPR022664">
    <property type="entry name" value="DapB_N_CS"/>
</dbReference>
<dbReference type="InterPro" id="IPR023940">
    <property type="entry name" value="DHDPR_bac"/>
</dbReference>
<dbReference type="InterPro" id="IPR036291">
    <property type="entry name" value="NAD(P)-bd_dom_sf"/>
</dbReference>
<dbReference type="NCBIfam" id="TIGR00036">
    <property type="entry name" value="dapB"/>
    <property type="match status" value="1"/>
</dbReference>
<dbReference type="PANTHER" id="PTHR20836:SF0">
    <property type="entry name" value="4-HYDROXY-TETRAHYDRODIPICOLINATE REDUCTASE 1, CHLOROPLASTIC-RELATED"/>
    <property type="match status" value="1"/>
</dbReference>
<dbReference type="PANTHER" id="PTHR20836">
    <property type="entry name" value="DIHYDRODIPICOLINATE REDUCTASE"/>
    <property type="match status" value="1"/>
</dbReference>
<dbReference type="Pfam" id="PF05173">
    <property type="entry name" value="DapB_C"/>
    <property type="match status" value="1"/>
</dbReference>
<dbReference type="Pfam" id="PF01113">
    <property type="entry name" value="DapB_N"/>
    <property type="match status" value="1"/>
</dbReference>
<dbReference type="PIRSF" id="PIRSF000161">
    <property type="entry name" value="DHPR"/>
    <property type="match status" value="1"/>
</dbReference>
<dbReference type="SUPFAM" id="SSF55347">
    <property type="entry name" value="Glyceraldehyde-3-phosphate dehydrogenase-like, C-terminal domain"/>
    <property type="match status" value="1"/>
</dbReference>
<dbReference type="SUPFAM" id="SSF51735">
    <property type="entry name" value="NAD(P)-binding Rossmann-fold domains"/>
    <property type="match status" value="1"/>
</dbReference>
<dbReference type="PROSITE" id="PS01298">
    <property type="entry name" value="DAPB"/>
    <property type="match status" value="1"/>
</dbReference>
<proteinExistence type="inferred from homology"/>
<comment type="function">
    <text evidence="1">Catalyzes the conversion of 4-hydroxy-tetrahydrodipicolinate (HTPA) to tetrahydrodipicolinate.</text>
</comment>
<comment type="catalytic activity">
    <reaction evidence="1">
        <text>(S)-2,3,4,5-tetrahydrodipicolinate + NAD(+) + H2O = (2S,4S)-4-hydroxy-2,3,4,5-tetrahydrodipicolinate + NADH + H(+)</text>
        <dbReference type="Rhea" id="RHEA:35323"/>
        <dbReference type="ChEBI" id="CHEBI:15377"/>
        <dbReference type="ChEBI" id="CHEBI:15378"/>
        <dbReference type="ChEBI" id="CHEBI:16845"/>
        <dbReference type="ChEBI" id="CHEBI:57540"/>
        <dbReference type="ChEBI" id="CHEBI:57945"/>
        <dbReference type="ChEBI" id="CHEBI:67139"/>
        <dbReference type="EC" id="1.17.1.8"/>
    </reaction>
</comment>
<comment type="catalytic activity">
    <reaction evidence="1">
        <text>(S)-2,3,4,5-tetrahydrodipicolinate + NADP(+) + H2O = (2S,4S)-4-hydroxy-2,3,4,5-tetrahydrodipicolinate + NADPH + H(+)</text>
        <dbReference type="Rhea" id="RHEA:35331"/>
        <dbReference type="ChEBI" id="CHEBI:15377"/>
        <dbReference type="ChEBI" id="CHEBI:15378"/>
        <dbReference type="ChEBI" id="CHEBI:16845"/>
        <dbReference type="ChEBI" id="CHEBI:57783"/>
        <dbReference type="ChEBI" id="CHEBI:58349"/>
        <dbReference type="ChEBI" id="CHEBI:67139"/>
        <dbReference type="EC" id="1.17.1.8"/>
    </reaction>
</comment>
<comment type="pathway">
    <text evidence="1">Amino-acid biosynthesis; L-lysine biosynthesis via DAP pathway; (S)-tetrahydrodipicolinate from L-aspartate: step 4/4.</text>
</comment>
<comment type="subcellular location">
    <subcellularLocation>
        <location evidence="1">Cytoplasm</location>
    </subcellularLocation>
</comment>
<comment type="similarity">
    <text evidence="1">Belongs to the DapB family.</text>
</comment>
<comment type="caution">
    <text evidence="2">Was originally thought to be a dihydrodipicolinate reductase (DHDPR), catalyzing the conversion of dihydrodipicolinate to tetrahydrodipicolinate. However, it was shown in E.coli that the substrate of the enzymatic reaction is not dihydrodipicolinate (DHDP) but in fact (2S,4S)-4-hydroxy-2,3,4,5-tetrahydrodipicolinic acid (HTPA), the product released by the DapA-catalyzed reaction.</text>
</comment>
<reference key="1">
    <citation type="journal article" date="1998" name="Nature">
        <title>The complete genome of the hyperthermophilic bacterium Aquifex aeolicus.</title>
        <authorList>
            <person name="Deckert G."/>
            <person name="Warren P.V."/>
            <person name="Gaasterland T."/>
            <person name="Young W.G."/>
            <person name="Lenox A.L."/>
            <person name="Graham D.E."/>
            <person name="Overbeek R."/>
            <person name="Snead M.A."/>
            <person name="Keller M."/>
            <person name="Aujay M."/>
            <person name="Huber R."/>
            <person name="Feldman R.A."/>
            <person name="Short J.M."/>
            <person name="Olsen G.J."/>
            <person name="Swanson R.V."/>
        </authorList>
    </citation>
    <scope>NUCLEOTIDE SEQUENCE [LARGE SCALE GENOMIC DNA]</scope>
    <source>
        <strain>VF5</strain>
    </source>
</reference>
<keyword id="KW-0028">Amino-acid biosynthesis</keyword>
<keyword id="KW-0963">Cytoplasm</keyword>
<keyword id="KW-0220">Diaminopimelate biosynthesis</keyword>
<keyword id="KW-0457">Lysine biosynthesis</keyword>
<keyword id="KW-0520">NAD</keyword>
<keyword id="KW-0521">NADP</keyword>
<keyword id="KW-0560">Oxidoreductase</keyword>
<keyword id="KW-1185">Reference proteome</keyword>
<protein>
    <recommendedName>
        <fullName evidence="1">4-hydroxy-tetrahydrodipicolinate reductase</fullName>
        <shortName evidence="1">HTPA reductase</shortName>
        <ecNumber evidence="1">1.17.1.8</ecNumber>
    </recommendedName>
</protein>
<gene>
    <name evidence="1" type="primary">dapB</name>
    <name type="ordered locus">aq_916</name>
</gene>
<organism>
    <name type="scientific">Aquifex aeolicus (strain VF5)</name>
    <dbReference type="NCBI Taxonomy" id="224324"/>
    <lineage>
        <taxon>Bacteria</taxon>
        <taxon>Pseudomonadati</taxon>
        <taxon>Aquificota</taxon>
        <taxon>Aquificia</taxon>
        <taxon>Aquificales</taxon>
        <taxon>Aquificaceae</taxon>
        <taxon>Aquifex</taxon>
    </lineage>
</organism>
<evidence type="ECO:0000255" key="1">
    <source>
        <dbReference type="HAMAP-Rule" id="MF_00102"/>
    </source>
</evidence>
<evidence type="ECO:0000305" key="2"/>